<sequence>MADTIHWADVIAEDVLKKSGKHLVATGITPSGNIHIGNMREVVTADAVYRALSNKGANADFIYIADNYDPLRKVYPFLPESYVEHVGKPISEIPCPCGNCANYAEHFLKPFLEALRRLGINPQVYRADEMYKTGKYTEAIKTALVKRDAIAKILEEVSGKTVAADWSPFNPRCNQCGKITTTKVTGFDLEAETVDYVCACGHSGIVPMAGGGKLTWRVDWPARWSVLGVTVEPFGKDHASKGGSYDTGKRIVREIFGHEPPYPIVYEWIMLGKQGAMSSSTGVVISISDMLEIIPPEVLRYLIIRTKPEKHIQFDPGQPLLTLVDEYERLRTQFRENDPSLGTFQKRVYELSRATGICQSEIPFKQMVTIYQVARGDFAQILKIVKRSGFSTEDKKCIKELADNVSKWLKLYAPPFAKFKVKEKVPVQAATLSELQRAFLSAFAALIESRGEISGEEYHMLVYSAKDEGSELNRKIAEKLNTHAPQVDPRELFKAIYFSLLGQKSGPKAGWFLSSFDKEFLVERFEEASNYSPEKQA</sequence>
<organism>
    <name type="scientific">Methanosarcina barkeri (strain Fusaro / DSM 804)</name>
    <dbReference type="NCBI Taxonomy" id="269797"/>
    <lineage>
        <taxon>Archaea</taxon>
        <taxon>Methanobacteriati</taxon>
        <taxon>Methanobacteriota</taxon>
        <taxon>Stenosarchaea group</taxon>
        <taxon>Methanomicrobia</taxon>
        <taxon>Methanosarcinales</taxon>
        <taxon>Methanosarcinaceae</taxon>
        <taxon>Methanosarcina</taxon>
    </lineage>
</organism>
<accession>Q46CD2</accession>
<feature type="chain" id="PRO_0000225642" description="Lysine--tRNA ligase">
    <location>
        <begin position="1"/>
        <end position="537"/>
    </location>
</feature>
<feature type="short sequence motif" description="'HIGH' region">
    <location>
        <begin position="30"/>
        <end position="38"/>
    </location>
</feature>
<feature type="short sequence motif" description="'KMSKS' region">
    <location>
        <begin position="276"/>
        <end position="280"/>
    </location>
</feature>
<evidence type="ECO:0000255" key="1">
    <source>
        <dbReference type="HAMAP-Rule" id="MF_00177"/>
    </source>
</evidence>
<keyword id="KW-0030">Aminoacyl-tRNA synthetase</keyword>
<keyword id="KW-0067">ATP-binding</keyword>
<keyword id="KW-0963">Cytoplasm</keyword>
<keyword id="KW-0436">Ligase</keyword>
<keyword id="KW-0547">Nucleotide-binding</keyword>
<keyword id="KW-0648">Protein biosynthesis</keyword>
<gene>
    <name evidence="1" type="primary">lysS</name>
    <name type="ordered locus">Mbar_A1507</name>
</gene>
<reference key="1">
    <citation type="journal article" date="2006" name="J. Bacteriol.">
        <title>The Methanosarcina barkeri genome: comparative analysis with Methanosarcina acetivorans and Methanosarcina mazei reveals extensive rearrangement within methanosarcinal genomes.</title>
        <authorList>
            <person name="Maeder D.L."/>
            <person name="Anderson I."/>
            <person name="Brettin T.S."/>
            <person name="Bruce D.C."/>
            <person name="Gilna P."/>
            <person name="Han C.S."/>
            <person name="Lapidus A."/>
            <person name="Metcalf W.W."/>
            <person name="Saunders E."/>
            <person name="Tapia R."/>
            <person name="Sowers K.R."/>
        </authorList>
    </citation>
    <scope>NUCLEOTIDE SEQUENCE [LARGE SCALE GENOMIC DNA]</scope>
    <source>
        <strain>Fusaro / DSM 804</strain>
    </source>
</reference>
<name>SYK_METBF</name>
<comment type="catalytic activity">
    <reaction evidence="1">
        <text>tRNA(Lys) + L-lysine + ATP = L-lysyl-tRNA(Lys) + AMP + diphosphate</text>
        <dbReference type="Rhea" id="RHEA:20792"/>
        <dbReference type="Rhea" id="RHEA-COMP:9696"/>
        <dbReference type="Rhea" id="RHEA-COMP:9697"/>
        <dbReference type="ChEBI" id="CHEBI:30616"/>
        <dbReference type="ChEBI" id="CHEBI:32551"/>
        <dbReference type="ChEBI" id="CHEBI:33019"/>
        <dbReference type="ChEBI" id="CHEBI:78442"/>
        <dbReference type="ChEBI" id="CHEBI:78529"/>
        <dbReference type="ChEBI" id="CHEBI:456215"/>
        <dbReference type="EC" id="6.1.1.6"/>
    </reaction>
</comment>
<comment type="subcellular location">
    <subcellularLocation>
        <location evidence="1">Cytoplasm</location>
    </subcellularLocation>
</comment>
<comment type="similarity">
    <text evidence="1">Belongs to the class-I aminoacyl-tRNA synthetase family.</text>
</comment>
<dbReference type="EC" id="6.1.1.6" evidence="1"/>
<dbReference type="EMBL" id="CP000099">
    <property type="protein sequence ID" value="AAZ70460.1"/>
    <property type="molecule type" value="Genomic_DNA"/>
</dbReference>
<dbReference type="SMR" id="Q46CD2"/>
<dbReference type="STRING" id="269797.Mbar_A1507"/>
<dbReference type="PaxDb" id="269797-Mbar_A1507"/>
<dbReference type="KEGG" id="mba:Mbar_A1507"/>
<dbReference type="eggNOG" id="arCOG00485">
    <property type="taxonomic scope" value="Archaea"/>
</dbReference>
<dbReference type="HOGENOM" id="CLU_025562_1_0_2"/>
<dbReference type="OrthoDB" id="6838at2157"/>
<dbReference type="GO" id="GO:0005737">
    <property type="term" value="C:cytoplasm"/>
    <property type="evidence" value="ECO:0007669"/>
    <property type="project" value="UniProtKB-SubCell"/>
</dbReference>
<dbReference type="GO" id="GO:0005524">
    <property type="term" value="F:ATP binding"/>
    <property type="evidence" value="ECO:0007669"/>
    <property type="project" value="UniProtKB-UniRule"/>
</dbReference>
<dbReference type="GO" id="GO:0004824">
    <property type="term" value="F:lysine-tRNA ligase activity"/>
    <property type="evidence" value="ECO:0007669"/>
    <property type="project" value="UniProtKB-UniRule"/>
</dbReference>
<dbReference type="GO" id="GO:0000049">
    <property type="term" value="F:tRNA binding"/>
    <property type="evidence" value="ECO:0007669"/>
    <property type="project" value="InterPro"/>
</dbReference>
<dbReference type="GO" id="GO:0006430">
    <property type="term" value="P:lysyl-tRNA aminoacylation"/>
    <property type="evidence" value="ECO:0007669"/>
    <property type="project" value="UniProtKB-UniRule"/>
</dbReference>
<dbReference type="CDD" id="cd00674">
    <property type="entry name" value="LysRS_core_class_I"/>
    <property type="match status" value="1"/>
</dbReference>
<dbReference type="Gene3D" id="1.10.10.350">
    <property type="match status" value="1"/>
</dbReference>
<dbReference type="Gene3D" id="1.10.10.770">
    <property type="match status" value="1"/>
</dbReference>
<dbReference type="Gene3D" id="3.40.50.620">
    <property type="entry name" value="HUPs"/>
    <property type="match status" value="2"/>
</dbReference>
<dbReference type="Gene3D" id="6.10.20.10">
    <property type="entry name" value="Lysine tRNA ligase, stem contact fold domain"/>
    <property type="match status" value="1"/>
</dbReference>
<dbReference type="HAMAP" id="MF_00177">
    <property type="entry name" value="Lys_tRNA_synth_class1"/>
    <property type="match status" value="1"/>
</dbReference>
<dbReference type="InterPro" id="IPR020751">
    <property type="entry name" value="aa-tRNA-synth_I_codon-bd_sub2"/>
</dbReference>
<dbReference type="InterPro" id="IPR001412">
    <property type="entry name" value="aa-tRNA-synth_I_CS"/>
</dbReference>
<dbReference type="InterPro" id="IPR008925">
    <property type="entry name" value="aa_tRNA-synth_I_cd-bd_sf"/>
</dbReference>
<dbReference type="InterPro" id="IPR002904">
    <property type="entry name" value="Lys-tRNA-ligase"/>
</dbReference>
<dbReference type="InterPro" id="IPR042078">
    <property type="entry name" value="Lys-tRNA-ligase_SC_fold"/>
</dbReference>
<dbReference type="InterPro" id="IPR014729">
    <property type="entry name" value="Rossmann-like_a/b/a_fold"/>
</dbReference>
<dbReference type="NCBIfam" id="TIGR00467">
    <property type="entry name" value="lysS_arch"/>
    <property type="match status" value="1"/>
</dbReference>
<dbReference type="PANTHER" id="PTHR37940">
    <property type="entry name" value="LYSINE--TRNA LIGASE"/>
    <property type="match status" value="1"/>
</dbReference>
<dbReference type="PANTHER" id="PTHR37940:SF1">
    <property type="entry name" value="LYSINE--TRNA LIGASE"/>
    <property type="match status" value="1"/>
</dbReference>
<dbReference type="Pfam" id="PF01921">
    <property type="entry name" value="tRNA-synt_1f"/>
    <property type="match status" value="1"/>
</dbReference>
<dbReference type="SUPFAM" id="SSF48163">
    <property type="entry name" value="An anticodon-binding domain of class I aminoacyl-tRNA synthetases"/>
    <property type="match status" value="1"/>
</dbReference>
<dbReference type="SUPFAM" id="SSF52374">
    <property type="entry name" value="Nucleotidylyl transferase"/>
    <property type="match status" value="1"/>
</dbReference>
<dbReference type="PROSITE" id="PS00178">
    <property type="entry name" value="AA_TRNA_LIGASE_I"/>
    <property type="match status" value="1"/>
</dbReference>
<proteinExistence type="inferred from homology"/>
<protein>
    <recommendedName>
        <fullName evidence="1">Lysine--tRNA ligase</fullName>
        <ecNumber evidence="1">6.1.1.6</ecNumber>
    </recommendedName>
    <alternativeName>
        <fullName evidence="1">Lysyl-tRNA synthetase</fullName>
        <shortName evidence="1">LysRS</shortName>
    </alternativeName>
</protein>